<gene>
    <name evidence="2" type="primary">OTC</name>
</gene>
<evidence type="ECO:0000250" key="1"/>
<evidence type="ECO:0000250" key="2">
    <source>
        <dbReference type="UniProtKB" id="P00480"/>
    </source>
</evidence>
<evidence type="ECO:0000250" key="3">
    <source>
        <dbReference type="UniProtKB" id="P11725"/>
    </source>
</evidence>
<evidence type="ECO:0000305" key="4"/>
<feature type="transit peptide" description="Mitochondrion" evidence="2">
    <location>
        <begin position="1"/>
        <end position="32"/>
    </location>
</feature>
<feature type="chain" id="PRO_0000245026" description="Ornithine transcarbamylase, mitochondrial">
    <location>
        <begin position="33"/>
        <end position="354"/>
    </location>
</feature>
<feature type="active site" evidence="1">
    <location>
        <position position="263"/>
    </location>
</feature>
<feature type="active site" evidence="1">
    <location>
        <position position="303"/>
    </location>
</feature>
<feature type="modified residue" description="N6-acetyllysine; alternate" evidence="3">
    <location>
        <position position="70"/>
    </location>
</feature>
<feature type="modified residue" description="N6-succinyllysine; alternate" evidence="3">
    <location>
        <position position="70"/>
    </location>
</feature>
<feature type="modified residue" description="N6-succinyllysine" evidence="3">
    <location>
        <position position="80"/>
    </location>
</feature>
<feature type="modified residue" description="N6-acetyllysine; alternate" evidence="2">
    <location>
        <position position="88"/>
    </location>
</feature>
<feature type="modified residue" description="N6-succinyllysine; alternate" evidence="3">
    <location>
        <position position="88"/>
    </location>
</feature>
<feature type="modified residue" description="Phosphoserine" evidence="2">
    <location>
        <position position="133"/>
    </location>
</feature>
<feature type="modified residue" description="N6-acetyllysine; alternate" evidence="3">
    <location>
        <position position="144"/>
    </location>
</feature>
<feature type="modified residue" description="N6-succinyllysine; alternate" evidence="3">
    <location>
        <position position="144"/>
    </location>
</feature>
<feature type="modified residue" description="N6-acetyllysine; alternate" evidence="3">
    <location>
        <position position="221"/>
    </location>
</feature>
<feature type="modified residue" description="N6-succinyllysine; alternate" evidence="3">
    <location>
        <position position="221"/>
    </location>
</feature>
<feature type="modified residue" description="N6-acetyllysine; alternate" evidence="3">
    <location>
        <position position="231"/>
    </location>
</feature>
<feature type="modified residue" description="N6-succinyllysine; alternate" evidence="3">
    <location>
        <position position="231"/>
    </location>
</feature>
<feature type="modified residue" description="N6-acetyllysine; alternate" evidence="3">
    <location>
        <position position="238"/>
    </location>
</feature>
<feature type="modified residue" description="N6-succinyllysine; alternate" evidence="3">
    <location>
        <position position="238"/>
    </location>
</feature>
<feature type="modified residue" description="N6-acetyllysine" evidence="3">
    <location>
        <position position="243"/>
    </location>
</feature>
<feature type="modified residue" description="N6-succinyllysine" evidence="3">
    <location>
        <position position="274"/>
    </location>
</feature>
<feature type="modified residue" description="N6-succinyllysine" evidence="3">
    <location>
        <position position="289"/>
    </location>
</feature>
<feature type="modified residue" description="N6-acetyllysine; alternate" evidence="3">
    <location>
        <position position="292"/>
    </location>
</feature>
<feature type="modified residue" description="N6-succinyllysine; alternate" evidence="3">
    <location>
        <position position="292"/>
    </location>
</feature>
<feature type="modified residue" description="N6-acetyllysine; alternate" evidence="3">
    <location>
        <position position="307"/>
    </location>
</feature>
<feature type="modified residue" description="N6-succinyllysine; alternate" evidence="3">
    <location>
        <position position="307"/>
    </location>
</feature>
<name>OTC_BOVIN</name>
<protein>
    <recommendedName>
        <fullName evidence="2">Ornithine transcarbamylase, mitochondrial</fullName>
        <shortName evidence="2">OTCase</shortName>
        <ecNumber evidence="2">2.1.3.3</ecNumber>
    </recommendedName>
    <alternativeName>
        <fullName evidence="2">Ornithine carbamoyltransferase, mitochondrial</fullName>
    </alternativeName>
</protein>
<comment type="function">
    <text evidence="2">Catalyzes the second step of the urea cycle, the condensation of carbamoyl phosphate with L-ornithine to form L-citrulline. The urea cycle ensures the detoxification of ammonia by converting it to urea for excretion.</text>
</comment>
<comment type="catalytic activity">
    <reaction evidence="2">
        <text>carbamoyl phosphate + L-ornithine = L-citrulline + phosphate + H(+)</text>
        <dbReference type="Rhea" id="RHEA:19513"/>
        <dbReference type="ChEBI" id="CHEBI:15378"/>
        <dbReference type="ChEBI" id="CHEBI:43474"/>
        <dbReference type="ChEBI" id="CHEBI:46911"/>
        <dbReference type="ChEBI" id="CHEBI:57743"/>
        <dbReference type="ChEBI" id="CHEBI:58228"/>
        <dbReference type="EC" id="2.1.3.3"/>
    </reaction>
    <physiologicalReaction direction="right-to-left" evidence="2">
        <dbReference type="Rhea" id="RHEA:19515"/>
    </physiologicalReaction>
</comment>
<comment type="activity regulation">
    <text evidence="2">Negatively regulated by lysine acetylation.</text>
</comment>
<comment type="pathway">
    <text evidence="2">Nitrogen metabolism; urea cycle; L-citrulline from L-ornithine and carbamoyl phosphate: step 1/1.</text>
</comment>
<comment type="subunit">
    <text evidence="2">Homotrimer.</text>
</comment>
<comment type="subcellular location">
    <subcellularLocation>
        <location evidence="2">Mitochondrion matrix</location>
    </subcellularLocation>
</comment>
<comment type="PTM">
    <text evidence="2">Acetylation at Lys-88 negatively regulates ornithine carbamoyltransferase activity in response to nutrient signals.</text>
</comment>
<comment type="similarity">
    <text evidence="4">Belongs to the aspartate/ornithine carbamoyltransferase superfamily. OTCase family.</text>
</comment>
<proteinExistence type="evidence at transcript level"/>
<sequence length="354" mass="39842">MLFHLRTLLNNAALRNGHNFVVRNFRCGQPLQDKVQLKGRDLLTLKNFTGEEIKYMLWLSADLKFRIKQKGEYLPLLQGKSLGMIFEKRSTRTRLSTETGFALLGGHPCFLTTDDIHLGVNESLTDTARVLSSMTDAVLARVYKQSDLDLLAKEASIPIVNGLSDLYHPIQILADYLTLQEHYGSLKGLTLSWIGDGNNILHSIMMSAAKFGMHLQVATPKGYEPDPSITKMAEQYAKENGTKLSLTNDPLEAACGGNVLITDTWISMGQEEEKKKRLQAFQGYQVTMKTAKVAAPDWTFLHCLPRKPEEVDDEVFYSPRSLVSPEAENRKWTIMAVMVSLLTDYSPQLQKPKF</sequence>
<organism>
    <name type="scientific">Bos taurus</name>
    <name type="common">Bovine</name>
    <dbReference type="NCBI Taxonomy" id="9913"/>
    <lineage>
        <taxon>Eukaryota</taxon>
        <taxon>Metazoa</taxon>
        <taxon>Chordata</taxon>
        <taxon>Craniata</taxon>
        <taxon>Vertebrata</taxon>
        <taxon>Euteleostomi</taxon>
        <taxon>Mammalia</taxon>
        <taxon>Eutheria</taxon>
        <taxon>Laurasiatheria</taxon>
        <taxon>Artiodactyla</taxon>
        <taxon>Ruminantia</taxon>
        <taxon>Pecora</taxon>
        <taxon>Bovidae</taxon>
        <taxon>Bovinae</taxon>
        <taxon>Bos</taxon>
    </lineage>
</organism>
<dbReference type="EC" id="2.1.3.3" evidence="2"/>
<dbReference type="EMBL" id="AF134841">
    <property type="protein sequence ID" value="AAF61405.1"/>
    <property type="molecule type" value="mRNA"/>
</dbReference>
<dbReference type="RefSeq" id="NP_803453.1">
    <property type="nucleotide sequence ID" value="NM_177487.2"/>
</dbReference>
<dbReference type="SMR" id="Q9N1U7"/>
<dbReference type="FunCoup" id="Q9N1U7">
    <property type="interactions" value="883"/>
</dbReference>
<dbReference type="STRING" id="9913.ENSBTAP00000001947"/>
<dbReference type="PaxDb" id="9913-ENSBTAP00000001947"/>
<dbReference type="PeptideAtlas" id="Q9N1U7"/>
<dbReference type="GeneID" id="280887"/>
<dbReference type="KEGG" id="bta:280887"/>
<dbReference type="CTD" id="5009"/>
<dbReference type="eggNOG" id="KOG1504">
    <property type="taxonomic scope" value="Eukaryota"/>
</dbReference>
<dbReference type="InParanoid" id="Q9N1U7"/>
<dbReference type="OrthoDB" id="10252326at2759"/>
<dbReference type="SABIO-RK" id="Q9N1U7"/>
<dbReference type="UniPathway" id="UPA00158">
    <property type="reaction ID" value="UER00271"/>
</dbReference>
<dbReference type="Proteomes" id="UP000009136">
    <property type="component" value="Unplaced"/>
</dbReference>
<dbReference type="GO" id="GO:0005743">
    <property type="term" value="C:mitochondrial inner membrane"/>
    <property type="evidence" value="ECO:0000250"/>
    <property type="project" value="AgBase"/>
</dbReference>
<dbReference type="GO" id="GO:0005759">
    <property type="term" value="C:mitochondrial matrix"/>
    <property type="evidence" value="ECO:0007669"/>
    <property type="project" value="UniProtKB-SubCell"/>
</dbReference>
<dbReference type="GO" id="GO:0005739">
    <property type="term" value="C:mitochondrion"/>
    <property type="evidence" value="ECO:0000250"/>
    <property type="project" value="AgBase"/>
</dbReference>
<dbReference type="GO" id="GO:0016597">
    <property type="term" value="F:amino acid binding"/>
    <property type="evidence" value="ECO:0007669"/>
    <property type="project" value="InterPro"/>
</dbReference>
<dbReference type="GO" id="GO:0004585">
    <property type="term" value="F:ornithine carbamoyltransferase activity"/>
    <property type="evidence" value="ECO:0000318"/>
    <property type="project" value="GO_Central"/>
</dbReference>
<dbReference type="GO" id="GO:0042450">
    <property type="term" value="P:arginine biosynthetic process via ornithine"/>
    <property type="evidence" value="ECO:0000318"/>
    <property type="project" value="GO_Central"/>
</dbReference>
<dbReference type="GO" id="GO:0019240">
    <property type="term" value="P:citrulline biosynthetic process"/>
    <property type="evidence" value="ECO:0000318"/>
    <property type="project" value="GO_Central"/>
</dbReference>
<dbReference type="GO" id="GO:0006526">
    <property type="term" value="P:L-arginine biosynthetic process"/>
    <property type="evidence" value="ECO:0007669"/>
    <property type="project" value="UniProtKB-KW"/>
</dbReference>
<dbReference type="GO" id="GO:0000050">
    <property type="term" value="P:urea cycle"/>
    <property type="evidence" value="ECO:0007669"/>
    <property type="project" value="UniProtKB-UniPathway"/>
</dbReference>
<dbReference type="FunFam" id="3.40.50.1370:FF:000009">
    <property type="entry name" value="Ornithine carbamoyltransferase, mitochondrial"/>
    <property type="match status" value="1"/>
</dbReference>
<dbReference type="FunFam" id="3.40.50.1370:FF:000010">
    <property type="entry name" value="Ornithine carbamoyltransferase, mitochondrial"/>
    <property type="match status" value="1"/>
</dbReference>
<dbReference type="Gene3D" id="3.40.50.1370">
    <property type="entry name" value="Aspartate/ornithine carbamoyltransferase"/>
    <property type="match status" value="2"/>
</dbReference>
<dbReference type="InterPro" id="IPR006132">
    <property type="entry name" value="Asp/Orn_carbamoyltranf_P-bd"/>
</dbReference>
<dbReference type="InterPro" id="IPR006130">
    <property type="entry name" value="Asp/Orn_carbamoylTrfase"/>
</dbReference>
<dbReference type="InterPro" id="IPR036901">
    <property type="entry name" value="Asp/Orn_carbamoylTrfase_sf"/>
</dbReference>
<dbReference type="InterPro" id="IPR006131">
    <property type="entry name" value="Asp_carbamoyltransf_Asp/Orn-bd"/>
</dbReference>
<dbReference type="InterPro" id="IPR002292">
    <property type="entry name" value="Orn/put_carbamltrans"/>
</dbReference>
<dbReference type="NCBIfam" id="TIGR00658">
    <property type="entry name" value="orni_carb_tr"/>
    <property type="match status" value="1"/>
</dbReference>
<dbReference type="NCBIfam" id="NF001986">
    <property type="entry name" value="PRK00779.1"/>
    <property type="match status" value="1"/>
</dbReference>
<dbReference type="PANTHER" id="PTHR45753">
    <property type="entry name" value="ORNITHINE CARBAMOYLTRANSFERASE, MITOCHONDRIAL"/>
    <property type="match status" value="1"/>
</dbReference>
<dbReference type="PANTHER" id="PTHR45753:SF3">
    <property type="entry name" value="ORNITHINE TRANSCARBAMYLASE, MITOCHONDRIAL"/>
    <property type="match status" value="1"/>
</dbReference>
<dbReference type="Pfam" id="PF00185">
    <property type="entry name" value="OTCace"/>
    <property type="match status" value="1"/>
</dbReference>
<dbReference type="Pfam" id="PF02729">
    <property type="entry name" value="OTCace_N"/>
    <property type="match status" value="1"/>
</dbReference>
<dbReference type="PRINTS" id="PR00100">
    <property type="entry name" value="AOTCASE"/>
</dbReference>
<dbReference type="PRINTS" id="PR00102">
    <property type="entry name" value="OTCASE"/>
</dbReference>
<dbReference type="SUPFAM" id="SSF53671">
    <property type="entry name" value="Aspartate/ornithine carbamoyltransferase"/>
    <property type="match status" value="1"/>
</dbReference>
<dbReference type="PROSITE" id="PS00097">
    <property type="entry name" value="CARBAMOYLTRANSFERASE"/>
    <property type="match status" value="1"/>
</dbReference>
<accession>Q9N1U7</accession>
<keyword id="KW-0007">Acetylation</keyword>
<keyword id="KW-0028">Amino-acid biosynthesis</keyword>
<keyword id="KW-0055">Arginine biosynthesis</keyword>
<keyword id="KW-0496">Mitochondrion</keyword>
<keyword id="KW-0597">Phosphoprotein</keyword>
<keyword id="KW-1185">Reference proteome</keyword>
<keyword id="KW-0808">Transferase</keyword>
<keyword id="KW-0809">Transit peptide</keyword>
<keyword id="KW-0835">Urea cycle</keyword>
<reference key="1">
    <citation type="submission" date="1999-03" db="EMBL/GenBank/DDBJ databases">
        <title>Ornithine transcarbamylase is expressed in uricotelic animals.</title>
        <authorList>
            <person name="Shimogiri T."/>
            <person name="Koyanagi K."/>
            <person name="Mannen H."/>
            <person name="Tsuji S."/>
        </authorList>
    </citation>
    <scope>NUCLEOTIDE SEQUENCE [MRNA]</scope>
</reference>